<reference key="1">
    <citation type="journal article" date="2003" name="J. Gen. Virol.">
        <title>Potato mop-top virus: the coat protein-encoding RNA and the gene for cysteine-rich protein are dispensable for systemic virus movement in Nicotiana benthamiana.</title>
        <authorList>
            <person name="Savenkov E.I."/>
            <person name="Germundsson A."/>
            <person name="Zamyatnin A.A. Jr."/>
            <person name="Sandgren M."/>
            <person name="Valkonen J.P."/>
        </authorList>
    </citation>
    <scope>NUCLEOTIDE SEQUENCE [GENOMIC RNA]</scope>
</reference>
<reference key="2">
    <citation type="journal article" date="2002" name="Virology">
        <title>Subcellular localisation, protein interactions, and RNA binding of Potato mop-top virus triple gene block proteins.</title>
        <authorList>
            <person name="Cowan G.H."/>
            <person name="Lioliopoulou F."/>
            <person name="Ziegler A."/>
            <person name="Torrance L."/>
        </authorList>
    </citation>
    <scope>RNA-BINDING</scope>
    <scope>SUBUNIT</scope>
    <scope>FUNCTION</scope>
</reference>
<reference key="3">
    <citation type="journal article" date="2010" name="Mol. Plant Microbe Interact.">
        <title>The N-terminal domain of PMTV TGB1 movement protein is required for nucleolar localization, microtubule association, and long-distance movement.</title>
        <authorList>
            <person name="Wright K.M."/>
            <person name="Cowan G.H."/>
            <person name="Lukhovitskaya N.I."/>
            <person name="Tilsner J."/>
            <person name="Roberts A.G."/>
            <person name="Savenkov E.I."/>
            <person name="Torrance L."/>
        </authorList>
    </citation>
    <scope>FUNCTION</scope>
    <scope>SUBCELLULAR LOCATION</scope>
</reference>
<reference key="4">
    <citation type="journal article" date="2011" name="Open Virol. J.">
        <title>The Role of Microtubule Association in Plasmodesmal Targeting of Potato mop-top virus Movement Protein TGBp1.</title>
        <authorList>
            <person name="Shemyakina E.A."/>
            <person name="Solovyev A.G."/>
            <person name="Leonova O.G."/>
            <person name="Popenko V.I."/>
            <person name="Schiemann J."/>
            <person name="Morozov S.Y."/>
        </authorList>
    </citation>
    <scope>FUNCTION</scope>
    <scope>SUBCELLULAR LOCATION</scope>
</reference>
<reference key="5">
    <citation type="journal article" date="2015" name="Plant Physiol.">
        <title>Importin-alpha-mediated nucleolar localization of potato mop-top virus TRIPLE GENE BLOCK1 (TGB1) protein facilitates virus systemic movement, whereas TGB1 self-interaction is required for cell-to-cell movement in Nicotiana benthamiana.</title>
        <authorList>
            <person name="Lukhovitskaya N.I."/>
            <person name="Cowan G.H."/>
            <person name="Vetukuri R.R."/>
            <person name="Tilsner J."/>
            <person name="Torrance L."/>
            <person name="Savenkov E.I."/>
        </authorList>
    </citation>
    <scope>SUBUNIT</scope>
    <scope>SUBCELLULAR LOCATION</scope>
    <scope>INTERACTION WITH HOST IMPORTIN SUBUNIT ALPHA</scope>
</reference>
<feature type="chain" id="PRO_0000410609" description="Movement protein TGB1">
    <location>
        <begin position="1"/>
        <end position="463"/>
    </location>
</feature>
<feature type="domain" description="(+)RNA virus helicase ATP-binding">
    <location>
        <begin position="185"/>
        <end position="326"/>
    </location>
</feature>
<feature type="domain" description="(+)RNA virus helicase C-terminal">
    <location>
        <begin position="327"/>
        <end position="463"/>
    </location>
</feature>
<feature type="region of interest" description="Disordered" evidence="3">
    <location>
        <begin position="1"/>
        <end position="126"/>
    </location>
</feature>
<feature type="region of interest" description="Nucleolar localization signal" evidence="8">
    <location>
        <begin position="11"/>
        <end position="16"/>
    </location>
</feature>
<feature type="region of interest" description="Nucleolar localization signal" evidence="8">
    <location>
        <begin position="37"/>
        <end position="52"/>
    </location>
</feature>
<feature type="compositionally biased region" description="Polar residues" evidence="3">
    <location>
        <begin position="23"/>
        <end position="49"/>
    </location>
</feature>
<feature type="compositionally biased region" description="Basic and acidic residues" evidence="3">
    <location>
        <begin position="58"/>
        <end position="67"/>
    </location>
</feature>
<feature type="compositionally biased region" description="Polar residues" evidence="3">
    <location>
        <begin position="83"/>
        <end position="95"/>
    </location>
</feature>
<feature type="compositionally biased region" description="Basic and acidic residues" evidence="3">
    <location>
        <begin position="96"/>
        <end position="107"/>
    </location>
</feature>
<feature type="binding site" evidence="2">
    <location>
        <begin position="215"/>
        <end position="222"/>
    </location>
    <ligand>
        <name>ATP</name>
        <dbReference type="ChEBI" id="CHEBI:30616"/>
    </ligand>
</feature>
<organism>
    <name type="scientific">Potato mop-top virus (isolate Potato/Sweden/Sw)</name>
    <name type="common">PMTV</name>
    <dbReference type="NCBI Taxonomy" id="652839"/>
    <lineage>
        <taxon>Viruses</taxon>
        <taxon>Riboviria</taxon>
        <taxon>Orthornavirae</taxon>
        <taxon>Kitrinoviricota</taxon>
        <taxon>Alsuviricetes</taxon>
        <taxon>Martellivirales</taxon>
        <taxon>Virgaviridae</taxon>
        <taxon>Pomovirus</taxon>
        <taxon>Potato mop-top virus</taxon>
    </lineage>
</organism>
<keyword id="KW-0067">ATP-binding</keyword>
<keyword id="KW-1031">Host cell junction</keyword>
<keyword id="KW-1035">Host cytoplasm</keyword>
<keyword id="KW-1037">Host cytoskeleton</keyword>
<keyword id="KW-1048">Host nucleus</keyword>
<keyword id="KW-0378">Hydrolase</keyword>
<keyword id="KW-0547">Nucleotide-binding</keyword>
<keyword id="KW-1185">Reference proteome</keyword>
<keyword id="KW-0813">Transport</keyword>
<keyword id="KW-0916">Viral movement protein</keyword>
<comment type="function">
    <text evidence="1 4 5 6 7">Participates in the transport of viral genome to neighboring plant cells directly through plasmodesmata, without any budding (PubMed:12093178, PubMed:12655103, PubMed:20923354, PubMed:21660184). Multifunctional movement protein with RNA-binding, ATPase and helicase activities (By similarity). Engages in homologous interactions leading to the formation of a ribonucleoprotein complex containing plus-sense viral RNAs (vRNPs) (By similarity). ATPase activity is probably required for vRNPs movement complex assembly (By similarity). Intracellular delivery of TGBp1-containing vRNPs to plasmodesmata is facilitated by TGBp2 and TGBp3 (PubMed:12093178).</text>
</comment>
<comment type="catalytic activity">
    <reaction evidence="1">
        <text>ATP + H2O = ADP + phosphate + H(+)</text>
        <dbReference type="Rhea" id="RHEA:13065"/>
        <dbReference type="ChEBI" id="CHEBI:15377"/>
        <dbReference type="ChEBI" id="CHEBI:15378"/>
        <dbReference type="ChEBI" id="CHEBI:30616"/>
        <dbReference type="ChEBI" id="CHEBI:43474"/>
        <dbReference type="ChEBI" id="CHEBI:456216"/>
    </reaction>
</comment>
<comment type="cofactor">
    <cofactor evidence="1">
        <name>Mg(2+)</name>
        <dbReference type="ChEBI" id="CHEBI:18420"/>
    </cofactor>
</comment>
<comment type="subunit">
    <text evidence="1 8 10">Homooligomer (Probable) (PubMed:25576325). TGB1-TGB3-TGB2 complex formation is enhanced by ATP hydrolysis (By similarity). Interacts with the suppressor of RNA silencing (via N-terminus) (By similarity). Interacts (via N-terminus) with host importin IMPA1 (PubMed:25576325).</text>
</comment>
<comment type="subcellular location">
    <subcellularLocation>
        <location evidence="6">Host cell junction</location>
        <location evidence="6">Host plasmodesma</location>
    </subcellularLocation>
    <subcellularLocation>
        <location evidence="6">Host nucleus</location>
    </subcellularLocation>
    <subcellularLocation>
        <location evidence="6">Host cytoplasm</location>
    </subcellularLocation>
    <subcellularLocation>
        <location evidence="6 8">Host nucleus</location>
        <location evidence="6 8">Host nucleolus</location>
    </subcellularLocation>
    <subcellularLocation>
        <location evidence="6 7">Host cytoplasm</location>
        <location evidence="6 7">Host cytoskeleton</location>
    </subcellularLocation>
    <text evidence="1 6">TGB1 nuclear-cytoplasmic trafficking is required for cell-to-cell movement and systemic infection (By similarity). Associates with host microtubules (PubMed:20923354).</text>
</comment>
<comment type="domain">
    <text evidence="9">The N-terminal 84 amino acids contain a nucleolar localization signal.</text>
</comment>
<comment type="similarity">
    <text evidence="9">Belongs to the virgaviridae/benyvirus TGB1 movement protein family.</text>
</comment>
<organismHost>
    <name type="scientific">Solanum nigrum</name>
    <name type="common">Black nightshade</name>
    <dbReference type="NCBI Taxonomy" id="4112"/>
</organismHost>
<organismHost>
    <name type="scientific">Solanum tuberosum</name>
    <name type="common">Potato</name>
    <dbReference type="NCBI Taxonomy" id="4113"/>
</organismHost>
<name>TGB1_PMTVS</name>
<dbReference type="EC" id="3.6.4.-" evidence="1"/>
<dbReference type="EMBL" id="AJ277556">
    <property type="protein sequence ID" value="CAB91101.1"/>
    <property type="molecule type" value="Genomic_RNA"/>
</dbReference>
<dbReference type="RefSeq" id="NP_620438.1">
    <property type="nucleotide sequence ID" value="NC_003725.1"/>
</dbReference>
<dbReference type="SMR" id="Q9IV54"/>
<dbReference type="TCDB" id="9.B.308.6.1">
    <property type="family name" value="the lettuce infectious yellows virus p5 (liyv-p5) family"/>
</dbReference>
<dbReference type="GeneID" id="991174"/>
<dbReference type="KEGG" id="vg:991174"/>
<dbReference type="Proteomes" id="UP000006715">
    <property type="component" value="Genome"/>
</dbReference>
<dbReference type="GO" id="GO:0030430">
    <property type="term" value="C:host cell cytoplasm"/>
    <property type="evidence" value="ECO:0007669"/>
    <property type="project" value="UniProtKB-SubCell"/>
</dbReference>
<dbReference type="GO" id="GO:0044196">
    <property type="term" value="C:host cell nucleolus"/>
    <property type="evidence" value="ECO:0007669"/>
    <property type="project" value="UniProtKB-SubCell"/>
</dbReference>
<dbReference type="GO" id="GO:0044219">
    <property type="term" value="C:host cell plasmodesma"/>
    <property type="evidence" value="ECO:0007669"/>
    <property type="project" value="UniProtKB-SubCell"/>
</dbReference>
<dbReference type="GO" id="GO:0044163">
    <property type="term" value="C:host cytoskeleton"/>
    <property type="evidence" value="ECO:0007669"/>
    <property type="project" value="UniProtKB-SubCell"/>
</dbReference>
<dbReference type="GO" id="GO:0005524">
    <property type="term" value="F:ATP binding"/>
    <property type="evidence" value="ECO:0007669"/>
    <property type="project" value="UniProtKB-KW"/>
</dbReference>
<dbReference type="GO" id="GO:0016787">
    <property type="term" value="F:hydrolase activity"/>
    <property type="evidence" value="ECO:0007669"/>
    <property type="project" value="UniProtKB-KW"/>
</dbReference>
<dbReference type="GO" id="GO:0046740">
    <property type="term" value="P:transport of virus in host, cell to cell"/>
    <property type="evidence" value="ECO:0007669"/>
    <property type="project" value="UniProtKB-KW"/>
</dbReference>
<dbReference type="Gene3D" id="3.40.50.300">
    <property type="entry name" value="P-loop containing nucleotide triphosphate hydrolases"/>
    <property type="match status" value="1"/>
</dbReference>
<dbReference type="InterPro" id="IPR027351">
    <property type="entry name" value="(+)RNA_virus_helicase_core_dom"/>
</dbReference>
<dbReference type="InterPro" id="IPR027417">
    <property type="entry name" value="P-loop_NTPase"/>
</dbReference>
<dbReference type="Pfam" id="PF01443">
    <property type="entry name" value="Viral_helicase1"/>
    <property type="match status" value="1"/>
</dbReference>
<dbReference type="SUPFAM" id="SSF52540">
    <property type="entry name" value="P-loop containing nucleoside triphosphate hydrolases"/>
    <property type="match status" value="1"/>
</dbReference>
<dbReference type="PROSITE" id="PS51657">
    <property type="entry name" value="PSRV_HELICASE"/>
    <property type="match status" value="1"/>
</dbReference>
<protein>
    <recommendedName>
        <fullName>Movement protein TGB1</fullName>
        <ecNumber evidence="1">3.6.4.-</ecNumber>
    </recommendedName>
    <alternativeName>
        <fullName>P51</fullName>
    </alternativeName>
    <alternativeName>
        <fullName>Triple gene block 1 protein</fullName>
        <shortName>TGBp1</shortName>
    </alternativeName>
</protein>
<proteinExistence type="evidence at protein level"/>
<sequence length="463" mass="51188">MESGFNGSRPHRVKKDLPDRVNPVNTQGSSGTTGNAFRKNNNNKTQNWKPRSGPGNRNEGDQTKNNKSDLQQPSEVHPENQVRPESSTGESVKQQSEPHRVLEDKKQSGKTAGSSVRIPEEGGGGLGSANYLGKRQLDFVAKLCVESGFKSTGKPLKRYPAEFFKSSGLLEKFVKYLSSRLDKGCNLSQRESEVVLKNLRSKRAEQSFLAGAVTGVPGSGKTTLLRKVQCEGGFNSIVILGNPRSKTEFSNLPSCYTAKEILLLGIAIKCEVLLIDEYTLLTSGEILLLQKITNSRIVILFGDRAQGSSNTLCSPEWLQVPVIFQSLTSRRFGKATANLCRRQGFDFEGGEHEDKVVESPYEGSSPATDINIVFSESTREDLLECGIESTLVSDVQGKEYNTVTLFIPDEDREYLTNAHLRSVAFSRHKFALEIRCNPELFMQLINGELASKQQPQTDRYGPE</sequence>
<evidence type="ECO:0000250" key="1">
    <source>
        <dbReference type="UniProtKB" id="P04867"/>
    </source>
</evidence>
<evidence type="ECO:0000255" key="2"/>
<evidence type="ECO:0000256" key="3">
    <source>
        <dbReference type="SAM" id="MobiDB-lite"/>
    </source>
</evidence>
<evidence type="ECO:0000269" key="4">
    <source>
    </source>
</evidence>
<evidence type="ECO:0000269" key="5">
    <source>
    </source>
</evidence>
<evidence type="ECO:0000269" key="6">
    <source>
    </source>
</evidence>
<evidence type="ECO:0000269" key="7">
    <source>
    </source>
</evidence>
<evidence type="ECO:0000269" key="8">
    <source>
    </source>
</evidence>
<evidence type="ECO:0000305" key="9"/>
<evidence type="ECO:0000305" key="10">
    <source>
    </source>
</evidence>
<accession>Q9IV54</accession>